<sequence length="113" mass="13160">MLGTANLPSRNKYKAKATILHMNRNLYLVAYDICNPRRLRQVCRYLTGYKVSGQKSVFEIWVTPTELHTIRTELDKLMDTQADRLHILSLDPRMKPRCYGNASTFTVQHFCIV</sequence>
<organism>
    <name type="scientific">Nitrosomonas europaea (strain ATCC 19718 / CIP 103999 / KCTC 2705 / NBRC 14298)</name>
    <dbReference type="NCBI Taxonomy" id="228410"/>
    <lineage>
        <taxon>Bacteria</taxon>
        <taxon>Pseudomonadati</taxon>
        <taxon>Pseudomonadota</taxon>
        <taxon>Betaproteobacteria</taxon>
        <taxon>Nitrosomonadales</taxon>
        <taxon>Nitrosomonadaceae</taxon>
        <taxon>Nitrosomonas</taxon>
    </lineage>
</organism>
<reference key="1">
    <citation type="journal article" date="2003" name="J. Bacteriol.">
        <title>Complete genome sequence of the ammonia-oxidizing bacterium and obligate chemolithoautotroph Nitrosomonas europaea.</title>
        <authorList>
            <person name="Chain P."/>
            <person name="Lamerdin J.E."/>
            <person name="Larimer F.W."/>
            <person name="Regala W."/>
            <person name="Lao V."/>
            <person name="Land M.L."/>
            <person name="Hauser L."/>
            <person name="Hooper A.B."/>
            <person name="Klotz M.G."/>
            <person name="Norton J."/>
            <person name="Sayavedra-Soto L.A."/>
            <person name="Arciero D.M."/>
            <person name="Hommes N.G."/>
            <person name="Whittaker M.M."/>
            <person name="Arp D.J."/>
        </authorList>
    </citation>
    <scope>NUCLEOTIDE SEQUENCE [LARGE SCALE GENOMIC DNA]</scope>
    <source>
        <strain>ATCC 19718 / CIP 103999 / KCTC 2705 / NBRC 14298</strain>
    </source>
</reference>
<proteinExistence type="inferred from homology"/>
<name>CAS2B_NITEU</name>
<dbReference type="EC" id="3.1.-.-"/>
<dbReference type="EMBL" id="AL954747">
    <property type="protein sequence ID" value="CAD84023.1"/>
    <property type="molecule type" value="Genomic_DNA"/>
</dbReference>
<dbReference type="SMR" id="Q82XY0"/>
<dbReference type="STRING" id="228410.NE0112"/>
<dbReference type="KEGG" id="neu:NE0112"/>
<dbReference type="eggNOG" id="COG1343">
    <property type="taxonomic scope" value="Bacteria"/>
</dbReference>
<dbReference type="HOGENOM" id="CLU_161124_3_2_4"/>
<dbReference type="OrthoDB" id="9798176at2"/>
<dbReference type="PhylomeDB" id="Q82XY0"/>
<dbReference type="Proteomes" id="UP000001416">
    <property type="component" value="Chromosome"/>
</dbReference>
<dbReference type="GO" id="GO:0046872">
    <property type="term" value="F:metal ion binding"/>
    <property type="evidence" value="ECO:0007669"/>
    <property type="project" value="UniProtKB-UniRule"/>
</dbReference>
<dbReference type="GO" id="GO:0004521">
    <property type="term" value="F:RNA endonuclease activity"/>
    <property type="evidence" value="ECO:0007669"/>
    <property type="project" value="InterPro"/>
</dbReference>
<dbReference type="GO" id="GO:0051607">
    <property type="term" value="P:defense response to virus"/>
    <property type="evidence" value="ECO:0007669"/>
    <property type="project" value="UniProtKB-UniRule"/>
</dbReference>
<dbReference type="GO" id="GO:0043571">
    <property type="term" value="P:maintenance of CRISPR repeat elements"/>
    <property type="evidence" value="ECO:0007669"/>
    <property type="project" value="UniProtKB-UniRule"/>
</dbReference>
<dbReference type="CDD" id="cd09725">
    <property type="entry name" value="Cas2_I_II_III"/>
    <property type="match status" value="1"/>
</dbReference>
<dbReference type="Gene3D" id="3.30.70.240">
    <property type="match status" value="1"/>
</dbReference>
<dbReference type="HAMAP" id="MF_01471">
    <property type="entry name" value="Cas2"/>
    <property type="match status" value="1"/>
</dbReference>
<dbReference type="InterPro" id="IPR021127">
    <property type="entry name" value="CRISPR_associated_Cas2"/>
</dbReference>
<dbReference type="InterPro" id="IPR019199">
    <property type="entry name" value="Virulence_VapD/CRISPR_Cas2"/>
</dbReference>
<dbReference type="NCBIfam" id="TIGR01573">
    <property type="entry name" value="cas2"/>
    <property type="match status" value="1"/>
</dbReference>
<dbReference type="PANTHER" id="PTHR34405">
    <property type="entry name" value="CRISPR-ASSOCIATED ENDORIBONUCLEASE CAS2"/>
    <property type="match status" value="1"/>
</dbReference>
<dbReference type="PANTHER" id="PTHR34405:SF3">
    <property type="entry name" value="CRISPR-ASSOCIATED ENDORIBONUCLEASE CAS2 3"/>
    <property type="match status" value="1"/>
</dbReference>
<dbReference type="Pfam" id="PF09827">
    <property type="entry name" value="CRISPR_Cas2"/>
    <property type="match status" value="1"/>
</dbReference>
<dbReference type="SUPFAM" id="SSF143430">
    <property type="entry name" value="TTP0101/SSO1404-like"/>
    <property type="match status" value="1"/>
</dbReference>
<feature type="chain" id="PRO_0000416945" description="CRISPR-associated endoribonuclease Cas2 2">
    <location>
        <begin position="1"/>
        <end position="113"/>
    </location>
</feature>
<feature type="binding site" evidence="2">
    <location>
        <position position="32"/>
    </location>
    <ligand>
        <name>Mg(2+)</name>
        <dbReference type="ChEBI" id="CHEBI:18420"/>
        <note>catalytic</note>
    </ligand>
</feature>
<comment type="function">
    <text evidence="1">CRISPR (clustered regularly interspaced short palindromic repeat), is an adaptive immune system that provides protection against mobile genetic elements (viruses, transposable elements and conjugative plasmids). CRISPR clusters contain sequences complementary to antecedent mobile elements and target invading nucleic acids. CRISPR clusters are transcribed and processed into CRISPR RNA (crRNA). Functions as a ssRNA-specific endoribonuclease. Involved in the integration of spacer DNA into the CRISPR cassette (By similarity).</text>
</comment>
<comment type="cofactor">
    <cofactor evidence="1">
        <name>Mg(2+)</name>
        <dbReference type="ChEBI" id="CHEBI:18420"/>
    </cofactor>
</comment>
<comment type="subunit">
    <text evidence="1">Homodimer, forms a heterotetramer with a Cas1 homodimer.</text>
</comment>
<comment type="similarity">
    <text evidence="3">Belongs to the CRISPR-associated endoribonuclease Cas2 protein family.</text>
</comment>
<gene>
    <name type="primary">cas22</name>
    <name type="ordered locus">NE0112</name>
</gene>
<accession>Q82XY0</accession>
<evidence type="ECO:0000250" key="1"/>
<evidence type="ECO:0000255" key="2"/>
<evidence type="ECO:0000305" key="3"/>
<protein>
    <recommendedName>
        <fullName>CRISPR-associated endoribonuclease Cas2 2</fullName>
        <ecNumber>3.1.-.-</ecNumber>
    </recommendedName>
</protein>
<keyword id="KW-0051">Antiviral defense</keyword>
<keyword id="KW-0255">Endonuclease</keyword>
<keyword id="KW-0378">Hydrolase</keyword>
<keyword id="KW-0460">Magnesium</keyword>
<keyword id="KW-0479">Metal-binding</keyword>
<keyword id="KW-0540">Nuclease</keyword>
<keyword id="KW-1185">Reference proteome</keyword>